<name>VF199_ASFWA</name>
<feature type="chain" id="PRO_0000373585" description="Inner membrane protein E199L">
    <location>
        <begin position="1"/>
        <end position="200"/>
    </location>
</feature>
<feature type="transmembrane region" description="Helical" evidence="2">
    <location>
        <begin position="150"/>
        <end position="170"/>
    </location>
</feature>
<feature type="glycosylation site" description="N-linked (GlcNAc...) asparagine; by host" evidence="2">
    <location>
        <position position="131"/>
    </location>
</feature>
<comment type="function">
    <text evidence="1">Essential for viral fusion with host endosomal membrane and core release (By similarity). Not required for virus morphogenesis and egress (By similarity). Induces complete autophagy through the interaction with and down-regulation of host PYCR2 (By similarity).</text>
</comment>
<comment type="subunit">
    <text evidence="1">Interacts with host PYCR2; this interaction results in autophagy activation.</text>
</comment>
<comment type="subcellular location">
    <subcellularLocation>
        <location evidence="1">Virion membrane</location>
    </subcellularLocation>
    <subcellularLocation>
        <location evidence="3">Host membrane</location>
        <topology evidence="1">Single-pass membrane protein</topology>
    </subcellularLocation>
    <text evidence="1">Found in the perinuclear cytoplasmic viral factories during assembly (By similarity). Part of the virion inner membrane (By similarity).</text>
</comment>
<comment type="induction">
    <text evidence="3">Expressed in the late phase of the viral replicative cycle.</text>
</comment>
<comment type="PTM">
    <text evidence="1">Contains intramolecular disulfide bonds.</text>
</comment>
<comment type="similarity">
    <text evidence="3">Belongs to the asfivirus E199L family.</text>
</comment>
<organismHost>
    <name type="scientific">Ornithodoros</name>
    <name type="common">relapsing fever ticks</name>
    <dbReference type="NCBI Taxonomy" id="6937"/>
</organismHost>
<organismHost>
    <name type="scientific">Phacochoerus aethiopicus</name>
    <name type="common">Warthog</name>
    <dbReference type="NCBI Taxonomy" id="85517"/>
</organismHost>
<organismHost>
    <name type="scientific">Phacochoerus africanus</name>
    <name type="common">Warthog</name>
    <dbReference type="NCBI Taxonomy" id="41426"/>
</organismHost>
<organismHost>
    <name type="scientific">Potamochoerus larvatus</name>
    <name type="common">Bushpig</name>
    <dbReference type="NCBI Taxonomy" id="273792"/>
</organismHost>
<organismHost>
    <name type="scientific">Sus scrofa</name>
    <name type="common">Pig</name>
    <dbReference type="NCBI Taxonomy" id="9823"/>
</organismHost>
<keyword id="KW-1072">Activation of host autophagy by virus</keyword>
<keyword id="KW-1015">Disulfide bond</keyword>
<keyword id="KW-0325">Glycoprotein</keyword>
<keyword id="KW-1043">Host membrane</keyword>
<keyword id="KW-0945">Host-virus interaction</keyword>
<keyword id="KW-0426">Late protein</keyword>
<keyword id="KW-0472">Membrane</keyword>
<keyword id="KW-0812">Transmembrane</keyword>
<keyword id="KW-1133">Transmembrane helix</keyword>
<keyword id="KW-0946">Virion</keyword>
<protein>
    <recommendedName>
        <fullName evidence="3">Inner membrane protein E199L</fullName>
        <shortName>pE199L</shortName>
    </recommendedName>
</protein>
<proteinExistence type="inferred from homology"/>
<dbReference type="EMBL" id="AY261366">
    <property type="status" value="NOT_ANNOTATED_CDS"/>
    <property type="molecule type" value="Genomic_DNA"/>
</dbReference>
<dbReference type="SMR" id="P0CA96"/>
<dbReference type="Proteomes" id="UP000000858">
    <property type="component" value="Segment"/>
</dbReference>
<dbReference type="GO" id="GO:0033644">
    <property type="term" value="C:host cell membrane"/>
    <property type="evidence" value="ECO:0007669"/>
    <property type="project" value="UniProtKB-SubCell"/>
</dbReference>
<dbReference type="GO" id="GO:0016020">
    <property type="term" value="C:membrane"/>
    <property type="evidence" value="ECO:0007669"/>
    <property type="project" value="UniProtKB-KW"/>
</dbReference>
<dbReference type="GO" id="GO:0055036">
    <property type="term" value="C:virion membrane"/>
    <property type="evidence" value="ECO:0007669"/>
    <property type="project" value="UniProtKB-SubCell"/>
</dbReference>
<dbReference type="GO" id="GO:0039520">
    <property type="term" value="P:symbiont-mediated activation of host autophagy"/>
    <property type="evidence" value="ECO:0007669"/>
    <property type="project" value="UniProtKB-KW"/>
</dbReference>
<reference key="1">
    <citation type="submission" date="2003-03" db="EMBL/GenBank/DDBJ databases">
        <title>African swine fever virus genomes.</title>
        <authorList>
            <person name="Kutish G.F."/>
            <person name="Rock D.L."/>
        </authorList>
    </citation>
    <scope>NUCLEOTIDE SEQUENCE [LARGE SCALE GENOMIC DNA]</scope>
</reference>
<sequence length="200" mass="22115">MSCMPVSTKCNDIWVDFSCTGPSISELQKKEPKAWAAIVRSRTNQQTAEDDNIIGSICDKQGLCSKDEYAYSQYCACVNSGTLWAECAFAPCNGNKNAYKTTEQRNILTNKQCPSGLTICQNIAEYGGSGNISDLYQNFNCNSVINTFLINVMNHPFLTLILIILILIIIYRLMSSSSGGKHNDDKLPPPSLIFSNLNNF</sequence>
<gene>
    <name type="ordered locus">War-140</name>
</gene>
<accession>P0CA96</accession>
<organism>
    <name type="scientific">African swine fever virus (isolate Warthog/Namibia/Wart80/1980)</name>
    <name type="common">ASFV</name>
    <dbReference type="NCBI Taxonomy" id="561444"/>
    <lineage>
        <taxon>Viruses</taxon>
        <taxon>Varidnaviria</taxon>
        <taxon>Bamfordvirae</taxon>
        <taxon>Nucleocytoviricota</taxon>
        <taxon>Pokkesviricetes</taxon>
        <taxon>Asfuvirales</taxon>
        <taxon>Asfarviridae</taxon>
        <taxon>Asfivirus</taxon>
        <taxon>African swine fever virus</taxon>
    </lineage>
</organism>
<evidence type="ECO:0000250" key="1">
    <source>
        <dbReference type="UniProtKB" id="Q65198"/>
    </source>
</evidence>
<evidence type="ECO:0000255" key="2"/>
<evidence type="ECO:0000305" key="3"/>